<feature type="chain" id="PRO_1000091736" description="Elongation factor G">
    <location>
        <begin position="1"/>
        <end position="701"/>
    </location>
</feature>
<feature type="domain" description="tr-type G">
    <location>
        <begin position="10"/>
        <end position="286"/>
    </location>
</feature>
<feature type="binding site" evidence="1">
    <location>
        <begin position="19"/>
        <end position="26"/>
    </location>
    <ligand>
        <name>GTP</name>
        <dbReference type="ChEBI" id="CHEBI:37565"/>
    </ligand>
</feature>
<feature type="binding site" evidence="1">
    <location>
        <begin position="83"/>
        <end position="87"/>
    </location>
    <ligand>
        <name>GTP</name>
        <dbReference type="ChEBI" id="CHEBI:37565"/>
    </ligand>
</feature>
<feature type="binding site" evidence="1">
    <location>
        <begin position="137"/>
        <end position="140"/>
    </location>
    <ligand>
        <name>GTP</name>
        <dbReference type="ChEBI" id="CHEBI:37565"/>
    </ligand>
</feature>
<keyword id="KW-0963">Cytoplasm</keyword>
<keyword id="KW-0251">Elongation factor</keyword>
<keyword id="KW-0342">GTP-binding</keyword>
<keyword id="KW-0547">Nucleotide-binding</keyword>
<keyword id="KW-0648">Protein biosynthesis</keyword>
<keyword id="KW-1185">Reference proteome</keyword>
<proteinExistence type="inferred from homology"/>
<sequence>MAQDVLTDLNKVRNIGIMAHIDAGKTTTTERILYYTGVNYKIGETHDGASTTDWMEQEQERGITITSAAVTCFWNGNQINIIDTPGHVDFTVEVERSLRVLDGAVAVFDGKEGVEPQSEQVWRQADKYDVPRICFVNKMDKLGADFYFTVQTIKDRLGAKPLVIQLPIGAENDFEGIIDLVEMNAKVWRGETKLGESYETVEIPADLADKAAEYRNELLETVAESDEALLEKYLGGEELSIDEIKAGIRKLTVASELYPVLCGSAFKNKGVQPMLDAVIDYLPSPLDVESVKGHVPGHEDQEIERKPSTDEPFSALAFKIAVHPFFGKLTYVRVYSGKIESGAQVVNATKGKKERLGKLFQMHANKENPVETAAAGHIYAVIGLKDTTTGDTLCDPNSQIVLESMTFPDPVIEVAIEPKTKTDQEKLGTAIQKLAEEDPTFKVKLDQETGQTVIGGMGELHLDILVDRMRREFKVEANVGKPQVAYRETIRKKVENVEFTHKKQTGGSGQFAKVIVTVEPLVDAEDGATYEFENKVTGGRVPREYIPSVDAGAQDAMQYGILAGYPLVNIKVTLLDGAYHDVDSSEMAFKIAGSQALKKAAQAAQPVILEPLMAVEVITPEDYMGDVIGDLNSRRGQIQAMEERSGARVVKAQVPLSEMFGYVGDLRSKTQGRANYSMVFDSYAEVPANVSKEIIAKATGE</sequence>
<comment type="function">
    <text evidence="1">Catalyzes the GTP-dependent ribosomal translocation step during translation elongation. During this step, the ribosome changes from the pre-translocational (PRE) to the post-translocational (POST) state as the newly formed A-site-bound peptidyl-tRNA and P-site-bound deacylated tRNA move to the P and E sites, respectively. Catalyzes the coordinated movement of the two tRNA molecules, the mRNA and conformational changes in the ribosome.</text>
</comment>
<comment type="subcellular location">
    <subcellularLocation>
        <location evidence="1">Cytoplasm</location>
    </subcellularLocation>
</comment>
<comment type="similarity">
    <text evidence="1">Belongs to the TRAFAC class translation factor GTPase superfamily. Classic translation factor GTPase family. EF-G/EF-2 subfamily.</text>
</comment>
<name>EFG_MYCA9</name>
<organism>
    <name type="scientific">Mycobacteroides abscessus (strain ATCC 19977 / DSM 44196 / CCUG 20993 / CIP 104536 / JCM 13569 / NCTC 13031 / TMC 1543 / L948)</name>
    <name type="common">Mycobacterium abscessus</name>
    <dbReference type="NCBI Taxonomy" id="561007"/>
    <lineage>
        <taxon>Bacteria</taxon>
        <taxon>Bacillati</taxon>
        <taxon>Actinomycetota</taxon>
        <taxon>Actinomycetes</taxon>
        <taxon>Mycobacteriales</taxon>
        <taxon>Mycobacteriaceae</taxon>
        <taxon>Mycobacteroides</taxon>
        <taxon>Mycobacteroides abscessus</taxon>
    </lineage>
</organism>
<protein>
    <recommendedName>
        <fullName evidence="1">Elongation factor G</fullName>
        <shortName evidence="1">EF-G</shortName>
    </recommendedName>
</protein>
<evidence type="ECO:0000255" key="1">
    <source>
        <dbReference type="HAMAP-Rule" id="MF_00054"/>
    </source>
</evidence>
<accession>B1MGH8</accession>
<reference key="1">
    <citation type="journal article" date="2009" name="PLoS ONE">
        <title>Non mycobacterial virulence genes in the genome of the emerging pathogen Mycobacterium abscessus.</title>
        <authorList>
            <person name="Ripoll F."/>
            <person name="Pasek S."/>
            <person name="Schenowitz C."/>
            <person name="Dossat C."/>
            <person name="Barbe V."/>
            <person name="Rottman M."/>
            <person name="Macheras E."/>
            <person name="Heym B."/>
            <person name="Herrmann J.L."/>
            <person name="Daffe M."/>
            <person name="Brosch R."/>
            <person name="Risler J.L."/>
            <person name="Gaillard J.L."/>
        </authorList>
    </citation>
    <scope>NUCLEOTIDE SEQUENCE [LARGE SCALE GENOMIC DNA]</scope>
    <source>
        <strain>ATCC 19977 / DSM 44196 / CCUG 20993 / CIP 104536 / JCM 13569 / NCTC 13031 / TMC 1543 / L948</strain>
    </source>
</reference>
<dbReference type="EMBL" id="CU458896">
    <property type="protein sequence ID" value="CAM63923.1"/>
    <property type="molecule type" value="Genomic_DNA"/>
</dbReference>
<dbReference type="RefSeq" id="WP_005055595.1">
    <property type="nucleotide sequence ID" value="NZ_MLCG01000001.1"/>
</dbReference>
<dbReference type="SMR" id="B1MGH8"/>
<dbReference type="GeneID" id="93380787"/>
<dbReference type="KEGG" id="mab:MAB_3849c"/>
<dbReference type="Proteomes" id="UP000007137">
    <property type="component" value="Chromosome"/>
</dbReference>
<dbReference type="GO" id="GO:0005737">
    <property type="term" value="C:cytoplasm"/>
    <property type="evidence" value="ECO:0007669"/>
    <property type="project" value="UniProtKB-SubCell"/>
</dbReference>
<dbReference type="GO" id="GO:0005525">
    <property type="term" value="F:GTP binding"/>
    <property type="evidence" value="ECO:0007669"/>
    <property type="project" value="UniProtKB-UniRule"/>
</dbReference>
<dbReference type="GO" id="GO:0003924">
    <property type="term" value="F:GTPase activity"/>
    <property type="evidence" value="ECO:0007669"/>
    <property type="project" value="InterPro"/>
</dbReference>
<dbReference type="GO" id="GO:0003746">
    <property type="term" value="F:translation elongation factor activity"/>
    <property type="evidence" value="ECO:0007669"/>
    <property type="project" value="UniProtKB-UniRule"/>
</dbReference>
<dbReference type="GO" id="GO:0032790">
    <property type="term" value="P:ribosome disassembly"/>
    <property type="evidence" value="ECO:0007669"/>
    <property type="project" value="TreeGrafter"/>
</dbReference>
<dbReference type="CDD" id="cd01886">
    <property type="entry name" value="EF-G"/>
    <property type="match status" value="1"/>
</dbReference>
<dbReference type="CDD" id="cd16262">
    <property type="entry name" value="EFG_III"/>
    <property type="match status" value="1"/>
</dbReference>
<dbReference type="CDD" id="cd01434">
    <property type="entry name" value="EFG_mtEFG1_IV"/>
    <property type="match status" value="1"/>
</dbReference>
<dbReference type="CDD" id="cd03713">
    <property type="entry name" value="EFG_mtEFG_C"/>
    <property type="match status" value="1"/>
</dbReference>
<dbReference type="CDD" id="cd04088">
    <property type="entry name" value="EFG_mtEFG_II"/>
    <property type="match status" value="1"/>
</dbReference>
<dbReference type="FunFam" id="2.40.30.10:FF:000006">
    <property type="entry name" value="Elongation factor G"/>
    <property type="match status" value="1"/>
</dbReference>
<dbReference type="FunFam" id="3.30.230.10:FF:000003">
    <property type="entry name" value="Elongation factor G"/>
    <property type="match status" value="1"/>
</dbReference>
<dbReference type="FunFam" id="3.30.70.240:FF:000001">
    <property type="entry name" value="Elongation factor G"/>
    <property type="match status" value="1"/>
</dbReference>
<dbReference type="FunFam" id="3.30.70.870:FF:000001">
    <property type="entry name" value="Elongation factor G"/>
    <property type="match status" value="1"/>
</dbReference>
<dbReference type="FunFam" id="3.40.50.300:FF:000029">
    <property type="entry name" value="Elongation factor G"/>
    <property type="match status" value="1"/>
</dbReference>
<dbReference type="Gene3D" id="3.30.230.10">
    <property type="match status" value="1"/>
</dbReference>
<dbReference type="Gene3D" id="3.30.70.240">
    <property type="match status" value="1"/>
</dbReference>
<dbReference type="Gene3D" id="3.30.70.870">
    <property type="entry name" value="Elongation Factor G (Translational Gtpase), domain 3"/>
    <property type="match status" value="1"/>
</dbReference>
<dbReference type="Gene3D" id="3.40.50.300">
    <property type="entry name" value="P-loop containing nucleotide triphosphate hydrolases"/>
    <property type="match status" value="1"/>
</dbReference>
<dbReference type="Gene3D" id="2.40.30.10">
    <property type="entry name" value="Translation factors"/>
    <property type="match status" value="1"/>
</dbReference>
<dbReference type="HAMAP" id="MF_00054_B">
    <property type="entry name" value="EF_G_EF_2_B"/>
    <property type="match status" value="1"/>
</dbReference>
<dbReference type="InterPro" id="IPR041095">
    <property type="entry name" value="EFG_II"/>
</dbReference>
<dbReference type="InterPro" id="IPR009022">
    <property type="entry name" value="EFG_III"/>
</dbReference>
<dbReference type="InterPro" id="IPR035647">
    <property type="entry name" value="EFG_III/V"/>
</dbReference>
<dbReference type="InterPro" id="IPR047872">
    <property type="entry name" value="EFG_IV"/>
</dbReference>
<dbReference type="InterPro" id="IPR035649">
    <property type="entry name" value="EFG_V"/>
</dbReference>
<dbReference type="InterPro" id="IPR000640">
    <property type="entry name" value="EFG_V-like"/>
</dbReference>
<dbReference type="InterPro" id="IPR004161">
    <property type="entry name" value="EFTu-like_2"/>
</dbReference>
<dbReference type="InterPro" id="IPR031157">
    <property type="entry name" value="G_TR_CS"/>
</dbReference>
<dbReference type="InterPro" id="IPR027417">
    <property type="entry name" value="P-loop_NTPase"/>
</dbReference>
<dbReference type="InterPro" id="IPR020568">
    <property type="entry name" value="Ribosomal_Su5_D2-typ_SF"/>
</dbReference>
<dbReference type="InterPro" id="IPR014721">
    <property type="entry name" value="Ribsml_uS5_D2-typ_fold_subgr"/>
</dbReference>
<dbReference type="InterPro" id="IPR005225">
    <property type="entry name" value="Small_GTP-bd"/>
</dbReference>
<dbReference type="InterPro" id="IPR000795">
    <property type="entry name" value="T_Tr_GTP-bd_dom"/>
</dbReference>
<dbReference type="InterPro" id="IPR009000">
    <property type="entry name" value="Transl_B-barrel_sf"/>
</dbReference>
<dbReference type="InterPro" id="IPR004540">
    <property type="entry name" value="Transl_elong_EFG/EF2"/>
</dbReference>
<dbReference type="InterPro" id="IPR005517">
    <property type="entry name" value="Transl_elong_EFG/EF2_IV"/>
</dbReference>
<dbReference type="NCBIfam" id="TIGR00484">
    <property type="entry name" value="EF-G"/>
    <property type="match status" value="1"/>
</dbReference>
<dbReference type="NCBIfam" id="NF009379">
    <property type="entry name" value="PRK12740.1-3"/>
    <property type="match status" value="1"/>
</dbReference>
<dbReference type="NCBIfam" id="NF009381">
    <property type="entry name" value="PRK12740.1-5"/>
    <property type="match status" value="1"/>
</dbReference>
<dbReference type="NCBIfam" id="TIGR00231">
    <property type="entry name" value="small_GTP"/>
    <property type="match status" value="1"/>
</dbReference>
<dbReference type="PANTHER" id="PTHR43261:SF1">
    <property type="entry name" value="RIBOSOME-RELEASING FACTOR 2, MITOCHONDRIAL"/>
    <property type="match status" value="1"/>
</dbReference>
<dbReference type="PANTHER" id="PTHR43261">
    <property type="entry name" value="TRANSLATION ELONGATION FACTOR G-RELATED"/>
    <property type="match status" value="1"/>
</dbReference>
<dbReference type="Pfam" id="PF00679">
    <property type="entry name" value="EFG_C"/>
    <property type="match status" value="1"/>
</dbReference>
<dbReference type="Pfam" id="PF14492">
    <property type="entry name" value="EFG_III"/>
    <property type="match status" value="1"/>
</dbReference>
<dbReference type="Pfam" id="PF03764">
    <property type="entry name" value="EFG_IV"/>
    <property type="match status" value="1"/>
</dbReference>
<dbReference type="Pfam" id="PF00009">
    <property type="entry name" value="GTP_EFTU"/>
    <property type="match status" value="1"/>
</dbReference>
<dbReference type="Pfam" id="PF03144">
    <property type="entry name" value="GTP_EFTU_D2"/>
    <property type="match status" value="1"/>
</dbReference>
<dbReference type="PRINTS" id="PR00315">
    <property type="entry name" value="ELONGATNFCT"/>
</dbReference>
<dbReference type="SMART" id="SM00838">
    <property type="entry name" value="EFG_C"/>
    <property type="match status" value="1"/>
</dbReference>
<dbReference type="SMART" id="SM00889">
    <property type="entry name" value="EFG_IV"/>
    <property type="match status" value="1"/>
</dbReference>
<dbReference type="SUPFAM" id="SSF54980">
    <property type="entry name" value="EF-G C-terminal domain-like"/>
    <property type="match status" value="2"/>
</dbReference>
<dbReference type="SUPFAM" id="SSF52540">
    <property type="entry name" value="P-loop containing nucleoside triphosphate hydrolases"/>
    <property type="match status" value="1"/>
</dbReference>
<dbReference type="SUPFAM" id="SSF54211">
    <property type="entry name" value="Ribosomal protein S5 domain 2-like"/>
    <property type="match status" value="1"/>
</dbReference>
<dbReference type="SUPFAM" id="SSF50447">
    <property type="entry name" value="Translation proteins"/>
    <property type="match status" value="1"/>
</dbReference>
<dbReference type="PROSITE" id="PS00301">
    <property type="entry name" value="G_TR_1"/>
    <property type="match status" value="1"/>
</dbReference>
<dbReference type="PROSITE" id="PS51722">
    <property type="entry name" value="G_TR_2"/>
    <property type="match status" value="1"/>
</dbReference>
<gene>
    <name evidence="1" type="primary">fusA</name>
    <name type="ordered locus">MAB_3849c</name>
</gene>